<keyword id="KW-1185">Reference proteome</keyword>
<protein>
    <recommendedName>
        <fullName>Uncharacterized protein K11H3.2</fullName>
    </recommendedName>
</protein>
<accession>P34518</accession>
<evidence type="ECO:0000256" key="1">
    <source>
        <dbReference type="SAM" id="MobiDB-lite"/>
    </source>
</evidence>
<evidence type="ECO:0000312" key="2">
    <source>
        <dbReference type="WormBase" id="K11H3.2"/>
    </source>
</evidence>
<reference key="1">
    <citation type="journal article" date="1994" name="Nature">
        <title>2.2 Mb of contiguous nucleotide sequence from chromosome III of C. elegans.</title>
        <authorList>
            <person name="Wilson R."/>
            <person name="Ainscough R."/>
            <person name="Anderson K."/>
            <person name="Baynes C."/>
            <person name="Berks M."/>
            <person name="Bonfield J."/>
            <person name="Burton J."/>
            <person name="Connell M."/>
            <person name="Copsey T."/>
            <person name="Cooper J."/>
            <person name="Coulson A."/>
            <person name="Craxton M."/>
            <person name="Dear S."/>
            <person name="Du Z."/>
            <person name="Durbin R."/>
            <person name="Favello A."/>
            <person name="Fraser A."/>
            <person name="Fulton L."/>
            <person name="Gardner A."/>
            <person name="Green P."/>
            <person name="Hawkins T."/>
            <person name="Hillier L."/>
            <person name="Jier M."/>
            <person name="Johnston L."/>
            <person name="Jones M."/>
            <person name="Kershaw J."/>
            <person name="Kirsten J."/>
            <person name="Laisster N."/>
            <person name="Latreille P."/>
            <person name="Lightning J."/>
            <person name="Lloyd C."/>
            <person name="Mortimore B."/>
            <person name="O'Callaghan M."/>
            <person name="Parsons J."/>
            <person name="Percy C."/>
            <person name="Rifken L."/>
            <person name="Roopra A."/>
            <person name="Saunders D."/>
            <person name="Shownkeen R."/>
            <person name="Sims M."/>
            <person name="Smaldon N."/>
            <person name="Smith A."/>
            <person name="Smith M."/>
            <person name="Sonnhammer E."/>
            <person name="Staden R."/>
            <person name="Sulston J."/>
            <person name="Thierry-Mieg J."/>
            <person name="Thomas K."/>
            <person name="Vaudin M."/>
            <person name="Vaughan K."/>
            <person name="Waterston R."/>
            <person name="Watson A."/>
            <person name="Weinstock L."/>
            <person name="Wilkinson-Sproat J."/>
            <person name="Wohldman P."/>
        </authorList>
    </citation>
    <scope>NUCLEOTIDE SEQUENCE [LARGE SCALE GENOMIC DNA]</scope>
    <source>
        <strain>Bristol N2</strain>
    </source>
</reference>
<reference key="2">
    <citation type="journal article" date="1998" name="Science">
        <title>Genome sequence of the nematode C. elegans: a platform for investigating biology.</title>
        <authorList>
            <consortium name="The C. elegans sequencing consortium"/>
        </authorList>
    </citation>
    <scope>NUCLEOTIDE SEQUENCE [LARGE SCALE GENOMIC DNA]</scope>
    <source>
        <strain>Bristol N2</strain>
    </source>
</reference>
<feature type="chain" id="PRO_0000065409" description="Uncharacterized protein K11H3.2">
    <location>
        <begin position="1"/>
        <end position="240"/>
    </location>
</feature>
<feature type="region of interest" description="Disordered" evidence="1">
    <location>
        <begin position="197"/>
        <end position="222"/>
    </location>
</feature>
<feature type="compositionally biased region" description="Polar residues" evidence="1">
    <location>
        <begin position="197"/>
        <end position="210"/>
    </location>
</feature>
<name>YM42_CAEEL</name>
<gene>
    <name evidence="2" type="ORF">K11H3.2</name>
</gene>
<sequence>MELSPNLKSNLNSEMNDLVQQAEEWAQSQHRSASPGALKDPKLCAIYKMILQNSALLLIEKSGVKTVEEFQKVFGPIIEEQKNKEDEIIEFEEFEEIEKARAELASPTSFTKYSMMLDEPLSASPFNRRRTSLFSDLHVLSPIASASSESFEKPKRFASSTQHAKKSFVTVESTRTPWRRSNSMYLEDVLNRTINTPLKSHSASRLNHLTPSPRPGETPLENRASRLRRMKIEEKMNENF</sequence>
<dbReference type="EMBL" id="BX284603">
    <property type="protein sequence ID" value="CAA80175.1"/>
    <property type="molecule type" value="Genomic_DNA"/>
</dbReference>
<dbReference type="PIR" id="S40755">
    <property type="entry name" value="S40755"/>
</dbReference>
<dbReference type="RefSeq" id="NP_001366673.1">
    <property type="nucleotide sequence ID" value="NM_001379872.2"/>
</dbReference>
<dbReference type="RefSeq" id="NP_499186.1">
    <property type="nucleotide sequence ID" value="NM_066785.1"/>
</dbReference>
<dbReference type="SMR" id="P34518"/>
<dbReference type="FunCoup" id="P34518">
    <property type="interactions" value="387"/>
</dbReference>
<dbReference type="PaxDb" id="6239-K11H3.2"/>
<dbReference type="EnsemblMetazoa" id="K11H3.2.1">
    <property type="protein sequence ID" value="K11H3.2.1"/>
    <property type="gene ID" value="WBGene00010779"/>
</dbReference>
<dbReference type="GeneID" id="187306"/>
<dbReference type="UCSC" id="K11H3.2">
    <property type="organism name" value="c. elegans"/>
</dbReference>
<dbReference type="AGR" id="WB:WBGene00010779"/>
<dbReference type="WormBase" id="K11H3.2">
    <property type="protein sequence ID" value="CE54138"/>
    <property type="gene ID" value="WBGene00010779"/>
</dbReference>
<dbReference type="eggNOG" id="ENOG502THUB">
    <property type="taxonomic scope" value="Eukaryota"/>
</dbReference>
<dbReference type="HOGENOM" id="CLU_1116577_0_0_1"/>
<dbReference type="InParanoid" id="P34518"/>
<dbReference type="OrthoDB" id="5875616at2759"/>
<dbReference type="PRO" id="PR:P34518"/>
<dbReference type="Proteomes" id="UP000001940">
    <property type="component" value="Chromosome III"/>
</dbReference>
<dbReference type="Bgee" id="WBGene00010779">
    <property type="expression patterns" value="Expressed in adult organism and 1 other cell type or tissue"/>
</dbReference>
<proteinExistence type="predicted"/>
<organism>
    <name type="scientific">Caenorhabditis elegans</name>
    <dbReference type="NCBI Taxonomy" id="6239"/>
    <lineage>
        <taxon>Eukaryota</taxon>
        <taxon>Metazoa</taxon>
        <taxon>Ecdysozoa</taxon>
        <taxon>Nematoda</taxon>
        <taxon>Chromadorea</taxon>
        <taxon>Rhabditida</taxon>
        <taxon>Rhabditina</taxon>
        <taxon>Rhabditomorpha</taxon>
        <taxon>Rhabditoidea</taxon>
        <taxon>Rhabditidae</taxon>
        <taxon>Peloderinae</taxon>
        <taxon>Caenorhabditis</taxon>
    </lineage>
</organism>